<feature type="chain" id="PRO_0000223919" description="Leucine-rich repeat-containing protein 46">
    <location>
        <begin position="1"/>
        <end position="321"/>
    </location>
</feature>
<feature type="repeat" description="LRR 1">
    <location>
        <begin position="45"/>
        <end position="66"/>
    </location>
</feature>
<feature type="repeat" description="LRR 2">
    <location>
        <begin position="67"/>
        <end position="88"/>
    </location>
</feature>
<feature type="repeat" description="LRR 3">
    <location>
        <begin position="89"/>
        <end position="110"/>
    </location>
</feature>
<feature type="repeat" description="LRR 4">
    <location>
        <begin position="111"/>
        <end position="132"/>
    </location>
</feature>
<feature type="domain" description="LRRCT">
    <location>
        <begin position="142"/>
        <end position="184"/>
    </location>
</feature>
<feature type="region of interest" description="Disordered" evidence="3">
    <location>
        <begin position="235"/>
        <end position="321"/>
    </location>
</feature>
<feature type="coiled-coil region" evidence="2">
    <location>
        <begin position="201"/>
        <end position="221"/>
    </location>
</feature>
<feature type="modified residue" description="Phosphoserine" evidence="1">
    <location>
        <position position="175"/>
    </location>
</feature>
<feature type="modified residue" description="Phosphoserine" evidence="1">
    <location>
        <position position="182"/>
    </location>
</feature>
<organism>
    <name type="scientific">Homo sapiens</name>
    <name type="common">Human</name>
    <dbReference type="NCBI Taxonomy" id="9606"/>
    <lineage>
        <taxon>Eukaryota</taxon>
        <taxon>Metazoa</taxon>
        <taxon>Chordata</taxon>
        <taxon>Craniata</taxon>
        <taxon>Vertebrata</taxon>
        <taxon>Euteleostomi</taxon>
        <taxon>Mammalia</taxon>
        <taxon>Eutheria</taxon>
        <taxon>Euarchontoglires</taxon>
        <taxon>Primates</taxon>
        <taxon>Haplorrhini</taxon>
        <taxon>Catarrhini</taxon>
        <taxon>Hominidae</taxon>
        <taxon>Homo</taxon>
    </lineage>
</organism>
<keyword id="KW-0966">Cell projection</keyword>
<keyword id="KW-0969">Cilium</keyword>
<keyword id="KW-0175">Coiled coil</keyword>
<keyword id="KW-0221">Differentiation</keyword>
<keyword id="KW-0282">Flagellum</keyword>
<keyword id="KW-0433">Leucine-rich repeat</keyword>
<keyword id="KW-0597">Phosphoprotein</keyword>
<keyword id="KW-1267">Proteomics identification</keyword>
<keyword id="KW-1185">Reference proteome</keyword>
<keyword id="KW-0677">Repeat</keyword>
<keyword id="KW-0744">Spermatogenesis</keyword>
<evidence type="ECO:0000250" key="1">
    <source>
        <dbReference type="UniProtKB" id="Q9DAP0"/>
    </source>
</evidence>
<evidence type="ECO:0000255" key="2"/>
<evidence type="ECO:0000256" key="3">
    <source>
        <dbReference type="SAM" id="MobiDB-lite"/>
    </source>
</evidence>
<accession>Q96FV0</accession>
<accession>A8K9Q0</accession>
<name>LRC46_HUMAN</name>
<proteinExistence type="evidence at protein level"/>
<dbReference type="EMBL" id="AK292765">
    <property type="protein sequence ID" value="BAF85454.1"/>
    <property type="molecule type" value="mRNA"/>
</dbReference>
<dbReference type="EMBL" id="AK315665">
    <property type="protein sequence ID" value="BAG38031.1"/>
    <property type="molecule type" value="mRNA"/>
</dbReference>
<dbReference type="EMBL" id="CH471109">
    <property type="protein sequence ID" value="EAW94793.1"/>
    <property type="molecule type" value="Genomic_DNA"/>
</dbReference>
<dbReference type="EMBL" id="BC010412">
    <property type="protein sequence ID" value="AAH10412.1"/>
    <property type="molecule type" value="mRNA"/>
</dbReference>
<dbReference type="CCDS" id="CCDS11518.1"/>
<dbReference type="RefSeq" id="NP_219481.1">
    <property type="nucleotide sequence ID" value="NM_033413.4"/>
</dbReference>
<dbReference type="SMR" id="Q96FV0"/>
<dbReference type="BioGRID" id="124725">
    <property type="interactions" value="26"/>
</dbReference>
<dbReference type="FunCoup" id="Q96FV0">
    <property type="interactions" value="41"/>
</dbReference>
<dbReference type="IntAct" id="Q96FV0">
    <property type="interactions" value="25"/>
</dbReference>
<dbReference type="STRING" id="9606.ENSP00000269025"/>
<dbReference type="GlyGen" id="Q96FV0">
    <property type="glycosylation" value="4 sites, 1 O-linked glycan (4 sites)"/>
</dbReference>
<dbReference type="iPTMnet" id="Q96FV0"/>
<dbReference type="PhosphoSitePlus" id="Q96FV0"/>
<dbReference type="BioMuta" id="LRRC46"/>
<dbReference type="DMDM" id="74760826"/>
<dbReference type="jPOST" id="Q96FV0"/>
<dbReference type="MassIVE" id="Q96FV0"/>
<dbReference type="PaxDb" id="9606-ENSP00000269025"/>
<dbReference type="PeptideAtlas" id="Q96FV0"/>
<dbReference type="ProteomicsDB" id="76558"/>
<dbReference type="Antibodypedia" id="17777">
    <property type="antibodies" value="80 antibodies from 16 providers"/>
</dbReference>
<dbReference type="DNASU" id="90506"/>
<dbReference type="Ensembl" id="ENST00000269025.9">
    <property type="protein sequence ID" value="ENSP00000269025.4"/>
    <property type="gene ID" value="ENSG00000141294.10"/>
</dbReference>
<dbReference type="GeneID" id="90506"/>
<dbReference type="KEGG" id="hsa:90506"/>
<dbReference type="MANE-Select" id="ENST00000269025.9">
    <property type="protein sequence ID" value="ENSP00000269025.4"/>
    <property type="RefSeq nucleotide sequence ID" value="NM_033413.4"/>
    <property type="RefSeq protein sequence ID" value="NP_219481.1"/>
</dbReference>
<dbReference type="UCSC" id="uc002ima.3">
    <property type="organism name" value="human"/>
</dbReference>
<dbReference type="AGR" id="HGNC:25047"/>
<dbReference type="CTD" id="90506"/>
<dbReference type="DisGeNET" id="90506"/>
<dbReference type="GeneCards" id="LRRC46"/>
<dbReference type="HGNC" id="HGNC:25047">
    <property type="gene designation" value="LRRC46"/>
</dbReference>
<dbReference type="HPA" id="ENSG00000141294">
    <property type="expression patterns" value="Tissue enhanced (fallopian tube, testis)"/>
</dbReference>
<dbReference type="MIM" id="620927">
    <property type="type" value="gene"/>
</dbReference>
<dbReference type="neXtProt" id="NX_Q96FV0"/>
<dbReference type="OpenTargets" id="ENSG00000141294"/>
<dbReference type="PharmGKB" id="PA142671506"/>
<dbReference type="VEuPathDB" id="HostDB:ENSG00000141294"/>
<dbReference type="eggNOG" id="KOG0531">
    <property type="taxonomic scope" value="Eukaryota"/>
</dbReference>
<dbReference type="GeneTree" id="ENSGT00940000161315"/>
<dbReference type="HOGENOM" id="CLU_075587_0_0_1"/>
<dbReference type="InParanoid" id="Q96FV0"/>
<dbReference type="OMA" id="PRQRKET"/>
<dbReference type="OrthoDB" id="7451790at2759"/>
<dbReference type="PAN-GO" id="Q96FV0">
    <property type="GO annotations" value="3 GO annotations based on evolutionary models"/>
</dbReference>
<dbReference type="PhylomeDB" id="Q96FV0"/>
<dbReference type="TreeFam" id="TF324815"/>
<dbReference type="PathwayCommons" id="Q96FV0"/>
<dbReference type="SignaLink" id="Q96FV0"/>
<dbReference type="BioGRID-ORCS" id="90506">
    <property type="hits" value="21 hits in 1154 CRISPR screens"/>
</dbReference>
<dbReference type="GenomeRNAi" id="90506"/>
<dbReference type="Pharos" id="Q96FV0">
    <property type="development level" value="Tdark"/>
</dbReference>
<dbReference type="PRO" id="PR:Q96FV0"/>
<dbReference type="Proteomes" id="UP000005640">
    <property type="component" value="Chromosome 17"/>
</dbReference>
<dbReference type="RNAct" id="Q96FV0">
    <property type="molecule type" value="protein"/>
</dbReference>
<dbReference type="Bgee" id="ENSG00000141294">
    <property type="expression patterns" value="Expressed in right uterine tube and 139 other cell types or tissues"/>
</dbReference>
<dbReference type="ExpressionAtlas" id="Q96FV0">
    <property type="expression patterns" value="baseline and differential"/>
</dbReference>
<dbReference type="GO" id="GO:0097225">
    <property type="term" value="C:sperm midpiece"/>
    <property type="evidence" value="ECO:0007669"/>
    <property type="project" value="Ensembl"/>
</dbReference>
<dbReference type="GO" id="GO:0098727">
    <property type="term" value="P:maintenance of cell number"/>
    <property type="evidence" value="ECO:0007669"/>
    <property type="project" value="Ensembl"/>
</dbReference>
<dbReference type="GO" id="GO:0007338">
    <property type="term" value="P:single fertilization"/>
    <property type="evidence" value="ECO:0007669"/>
    <property type="project" value="Ensembl"/>
</dbReference>
<dbReference type="GO" id="GO:0007288">
    <property type="term" value="P:sperm axoneme assembly"/>
    <property type="evidence" value="ECO:0007669"/>
    <property type="project" value="Ensembl"/>
</dbReference>
<dbReference type="GO" id="GO:0120316">
    <property type="term" value="P:sperm flagellum assembly"/>
    <property type="evidence" value="ECO:0000250"/>
    <property type="project" value="UniProtKB"/>
</dbReference>
<dbReference type="GO" id="GO:0120317">
    <property type="term" value="P:sperm mitochondrial sheath assembly"/>
    <property type="evidence" value="ECO:0007669"/>
    <property type="project" value="Ensembl"/>
</dbReference>
<dbReference type="GO" id="GO:0007283">
    <property type="term" value="P:spermatogenesis"/>
    <property type="evidence" value="ECO:0000250"/>
    <property type="project" value="UniProtKB"/>
</dbReference>
<dbReference type="FunFam" id="3.80.10.10:FF:000932">
    <property type="entry name" value="Leucine Rich Repeat family protein"/>
    <property type="match status" value="1"/>
</dbReference>
<dbReference type="Gene3D" id="3.80.10.10">
    <property type="entry name" value="Ribonuclease Inhibitor"/>
    <property type="match status" value="1"/>
</dbReference>
<dbReference type="InterPro" id="IPR050576">
    <property type="entry name" value="Cilia_flagella_integrity"/>
</dbReference>
<dbReference type="InterPro" id="IPR001611">
    <property type="entry name" value="Leu-rich_rpt"/>
</dbReference>
<dbReference type="InterPro" id="IPR003591">
    <property type="entry name" value="Leu-rich_rpt_typical-subtyp"/>
</dbReference>
<dbReference type="InterPro" id="IPR032675">
    <property type="entry name" value="LRR_dom_sf"/>
</dbReference>
<dbReference type="PANTHER" id="PTHR45973:SF9">
    <property type="entry name" value="LEUCINE-RICH REPEAT-CONTAINING PROTEIN 46"/>
    <property type="match status" value="1"/>
</dbReference>
<dbReference type="PANTHER" id="PTHR45973">
    <property type="entry name" value="PROTEIN PHOSPHATASE 1 REGULATORY SUBUNIT SDS22-RELATED"/>
    <property type="match status" value="1"/>
</dbReference>
<dbReference type="Pfam" id="PF13855">
    <property type="entry name" value="LRR_8"/>
    <property type="match status" value="1"/>
</dbReference>
<dbReference type="SMART" id="SM00365">
    <property type="entry name" value="LRR_SD22"/>
    <property type="match status" value="3"/>
</dbReference>
<dbReference type="SMART" id="SM00369">
    <property type="entry name" value="LRR_TYP"/>
    <property type="match status" value="2"/>
</dbReference>
<dbReference type="SUPFAM" id="SSF52058">
    <property type="entry name" value="L domain-like"/>
    <property type="match status" value="1"/>
</dbReference>
<dbReference type="PROSITE" id="PS51450">
    <property type="entry name" value="LRR"/>
    <property type="match status" value="5"/>
</dbReference>
<gene>
    <name type="primary">LRRC46</name>
</gene>
<protein>
    <recommendedName>
        <fullName>Leucine-rich repeat-containing protein 46</fullName>
    </recommendedName>
</protein>
<sequence>MSGGKSAQGPEEGGVCITEALITKRNLTFPEDGELSEKMFHTLDELQTVRLDREGITTIRNLEGLQNLHSLYLQGNKIQQIENLACIPSLRFLSLAGNQIRQVENLLDLPCLQFLDLSENLIETLKLDEFPQSLLILNLSGNSCTNQDGYRELVTEALPLLLDLDGQPVVERWISDEEDEASSDEEFPELSGPFCSERGFLKELEQELSRHREHRQQTALTEHLLRMEMQPTLTDLPLLPGVPMAGDSSPSATPAQGEETVPEAVSSPQASSPTKKPCSLIPRGHQSSFWGRKGARAATAPKASVAEAPSTTKTTAKRSKK</sequence>
<reference key="1">
    <citation type="journal article" date="2004" name="Nat. Genet.">
        <title>Complete sequencing and characterization of 21,243 full-length human cDNAs.</title>
        <authorList>
            <person name="Ota T."/>
            <person name="Suzuki Y."/>
            <person name="Nishikawa T."/>
            <person name="Otsuki T."/>
            <person name="Sugiyama T."/>
            <person name="Irie R."/>
            <person name="Wakamatsu A."/>
            <person name="Hayashi K."/>
            <person name="Sato H."/>
            <person name="Nagai K."/>
            <person name="Kimura K."/>
            <person name="Makita H."/>
            <person name="Sekine M."/>
            <person name="Obayashi M."/>
            <person name="Nishi T."/>
            <person name="Shibahara T."/>
            <person name="Tanaka T."/>
            <person name="Ishii S."/>
            <person name="Yamamoto J."/>
            <person name="Saito K."/>
            <person name="Kawai Y."/>
            <person name="Isono Y."/>
            <person name="Nakamura Y."/>
            <person name="Nagahari K."/>
            <person name="Murakami K."/>
            <person name="Yasuda T."/>
            <person name="Iwayanagi T."/>
            <person name="Wagatsuma M."/>
            <person name="Shiratori A."/>
            <person name="Sudo H."/>
            <person name="Hosoiri T."/>
            <person name="Kaku Y."/>
            <person name="Kodaira H."/>
            <person name="Kondo H."/>
            <person name="Sugawara M."/>
            <person name="Takahashi M."/>
            <person name="Kanda K."/>
            <person name="Yokoi T."/>
            <person name="Furuya T."/>
            <person name="Kikkawa E."/>
            <person name="Omura Y."/>
            <person name="Abe K."/>
            <person name="Kamihara K."/>
            <person name="Katsuta N."/>
            <person name="Sato K."/>
            <person name="Tanikawa M."/>
            <person name="Yamazaki M."/>
            <person name="Ninomiya K."/>
            <person name="Ishibashi T."/>
            <person name="Yamashita H."/>
            <person name="Murakawa K."/>
            <person name="Fujimori K."/>
            <person name="Tanai H."/>
            <person name="Kimata M."/>
            <person name="Watanabe M."/>
            <person name="Hiraoka S."/>
            <person name="Chiba Y."/>
            <person name="Ishida S."/>
            <person name="Ono Y."/>
            <person name="Takiguchi S."/>
            <person name="Watanabe S."/>
            <person name="Yosida M."/>
            <person name="Hotuta T."/>
            <person name="Kusano J."/>
            <person name="Kanehori K."/>
            <person name="Takahashi-Fujii A."/>
            <person name="Hara H."/>
            <person name="Tanase T.-O."/>
            <person name="Nomura Y."/>
            <person name="Togiya S."/>
            <person name="Komai F."/>
            <person name="Hara R."/>
            <person name="Takeuchi K."/>
            <person name="Arita M."/>
            <person name="Imose N."/>
            <person name="Musashino K."/>
            <person name="Yuuki H."/>
            <person name="Oshima A."/>
            <person name="Sasaki N."/>
            <person name="Aotsuka S."/>
            <person name="Yoshikawa Y."/>
            <person name="Matsunawa H."/>
            <person name="Ichihara T."/>
            <person name="Shiohata N."/>
            <person name="Sano S."/>
            <person name="Moriya S."/>
            <person name="Momiyama H."/>
            <person name="Satoh N."/>
            <person name="Takami S."/>
            <person name="Terashima Y."/>
            <person name="Suzuki O."/>
            <person name="Nakagawa S."/>
            <person name="Senoh A."/>
            <person name="Mizoguchi H."/>
            <person name="Goto Y."/>
            <person name="Shimizu F."/>
            <person name="Wakebe H."/>
            <person name="Hishigaki H."/>
            <person name="Watanabe T."/>
            <person name="Sugiyama A."/>
            <person name="Takemoto M."/>
            <person name="Kawakami B."/>
            <person name="Yamazaki M."/>
            <person name="Watanabe K."/>
            <person name="Kumagai A."/>
            <person name="Itakura S."/>
            <person name="Fukuzumi Y."/>
            <person name="Fujimori Y."/>
            <person name="Komiyama M."/>
            <person name="Tashiro H."/>
            <person name="Tanigami A."/>
            <person name="Fujiwara T."/>
            <person name="Ono T."/>
            <person name="Yamada K."/>
            <person name="Fujii Y."/>
            <person name="Ozaki K."/>
            <person name="Hirao M."/>
            <person name="Ohmori Y."/>
            <person name="Kawabata A."/>
            <person name="Hikiji T."/>
            <person name="Kobatake N."/>
            <person name="Inagaki H."/>
            <person name="Ikema Y."/>
            <person name="Okamoto S."/>
            <person name="Okitani R."/>
            <person name="Kawakami T."/>
            <person name="Noguchi S."/>
            <person name="Itoh T."/>
            <person name="Shigeta K."/>
            <person name="Senba T."/>
            <person name="Matsumura K."/>
            <person name="Nakajima Y."/>
            <person name="Mizuno T."/>
            <person name="Morinaga M."/>
            <person name="Sasaki M."/>
            <person name="Togashi T."/>
            <person name="Oyama M."/>
            <person name="Hata H."/>
            <person name="Watanabe M."/>
            <person name="Komatsu T."/>
            <person name="Mizushima-Sugano J."/>
            <person name="Satoh T."/>
            <person name="Shirai Y."/>
            <person name="Takahashi Y."/>
            <person name="Nakagawa K."/>
            <person name="Okumura K."/>
            <person name="Nagase T."/>
            <person name="Nomura N."/>
            <person name="Kikuchi H."/>
            <person name="Masuho Y."/>
            <person name="Yamashita R."/>
            <person name="Nakai K."/>
            <person name="Yada T."/>
            <person name="Nakamura Y."/>
            <person name="Ohara O."/>
            <person name="Isogai T."/>
            <person name="Sugano S."/>
        </authorList>
    </citation>
    <scope>NUCLEOTIDE SEQUENCE [LARGE SCALE MRNA]</scope>
    <source>
        <tissue>Ovary</tissue>
        <tissue>Testis</tissue>
    </source>
</reference>
<reference key="2">
    <citation type="submission" date="2005-09" db="EMBL/GenBank/DDBJ databases">
        <authorList>
            <person name="Mural R.J."/>
            <person name="Istrail S."/>
            <person name="Sutton G."/>
            <person name="Florea L."/>
            <person name="Halpern A.L."/>
            <person name="Mobarry C.M."/>
            <person name="Lippert R."/>
            <person name="Walenz B."/>
            <person name="Shatkay H."/>
            <person name="Dew I."/>
            <person name="Miller J.R."/>
            <person name="Flanigan M.J."/>
            <person name="Edwards N.J."/>
            <person name="Bolanos R."/>
            <person name="Fasulo D."/>
            <person name="Halldorsson B.V."/>
            <person name="Hannenhalli S."/>
            <person name="Turner R."/>
            <person name="Yooseph S."/>
            <person name="Lu F."/>
            <person name="Nusskern D.R."/>
            <person name="Shue B.C."/>
            <person name="Zheng X.H."/>
            <person name="Zhong F."/>
            <person name="Delcher A.L."/>
            <person name="Huson D.H."/>
            <person name="Kravitz S.A."/>
            <person name="Mouchard L."/>
            <person name="Reinert K."/>
            <person name="Remington K.A."/>
            <person name="Clark A.G."/>
            <person name="Waterman M.S."/>
            <person name="Eichler E.E."/>
            <person name="Adams M.D."/>
            <person name="Hunkapiller M.W."/>
            <person name="Myers E.W."/>
            <person name="Venter J.C."/>
        </authorList>
    </citation>
    <scope>NUCLEOTIDE SEQUENCE [LARGE SCALE GENOMIC DNA]</scope>
</reference>
<reference key="3">
    <citation type="journal article" date="2004" name="Genome Res.">
        <title>The status, quality, and expansion of the NIH full-length cDNA project: the Mammalian Gene Collection (MGC).</title>
        <authorList>
            <consortium name="The MGC Project Team"/>
        </authorList>
    </citation>
    <scope>NUCLEOTIDE SEQUENCE [LARGE SCALE MRNA]</scope>
    <source>
        <tissue>Ovary</tissue>
    </source>
</reference>
<comment type="function">
    <text evidence="1">Required for normal spermatogenesis and male fertility. Plays an important role in sperm flagellum biogenesis.</text>
</comment>
<comment type="subcellular location">
    <subcellularLocation>
        <location evidence="1">Cell projection</location>
        <location evidence="1">Cilium</location>
        <location evidence="1">Flagellum</location>
    </subcellularLocation>
</comment>